<reference key="1">
    <citation type="journal article" date="2002" name="Proc. Natl. Acad. Sci. U.S.A.">
        <title>Genome sequence and comparative microarray analysis of serotype M18 group A Streptococcus strains associated with acute rheumatic fever outbreaks.</title>
        <authorList>
            <person name="Smoot J.C."/>
            <person name="Barbian K.D."/>
            <person name="Van Gompel J.J."/>
            <person name="Smoot L.M."/>
            <person name="Chaussee M.S."/>
            <person name="Sylva G.L."/>
            <person name="Sturdevant D.E."/>
            <person name="Ricklefs S.M."/>
            <person name="Porcella S.F."/>
            <person name="Parkins L.D."/>
            <person name="Beres S.B."/>
            <person name="Campbell D.S."/>
            <person name="Smith T.M."/>
            <person name="Zhang Q."/>
            <person name="Kapur V."/>
            <person name="Daly J.A."/>
            <person name="Veasy L.G."/>
            <person name="Musser J.M."/>
        </authorList>
    </citation>
    <scope>NUCLEOTIDE SEQUENCE [LARGE SCALE GENOMIC DNA]</scope>
    <source>
        <strain>MGAS8232</strain>
    </source>
</reference>
<protein>
    <recommendedName>
        <fullName>Dihydropteroate synthase</fullName>
        <shortName>DHPS</shortName>
        <ecNumber>2.5.1.15</ecNumber>
    </recommendedName>
    <alternativeName>
        <fullName>Dihydropteroate pyrophosphorylase</fullName>
    </alternativeName>
</protein>
<proteinExistence type="inferred from homology"/>
<dbReference type="EC" id="2.5.1.15"/>
<dbReference type="EMBL" id="AE009949">
    <property type="protein sequence ID" value="AAL97684.1"/>
    <property type="molecule type" value="Genomic_DNA"/>
</dbReference>
<dbReference type="RefSeq" id="WP_011017740.1">
    <property type="nucleotide sequence ID" value="NC_003485.1"/>
</dbReference>
<dbReference type="SMR" id="Q8P152"/>
<dbReference type="KEGG" id="spm:spyM18_1060"/>
<dbReference type="HOGENOM" id="CLU_008023_0_2_9"/>
<dbReference type="UniPathway" id="UPA00077">
    <property type="reaction ID" value="UER00156"/>
</dbReference>
<dbReference type="GO" id="GO:0005829">
    <property type="term" value="C:cytosol"/>
    <property type="evidence" value="ECO:0007669"/>
    <property type="project" value="TreeGrafter"/>
</dbReference>
<dbReference type="GO" id="GO:0004156">
    <property type="term" value="F:dihydropteroate synthase activity"/>
    <property type="evidence" value="ECO:0007669"/>
    <property type="project" value="UniProtKB-EC"/>
</dbReference>
<dbReference type="GO" id="GO:0046872">
    <property type="term" value="F:metal ion binding"/>
    <property type="evidence" value="ECO:0007669"/>
    <property type="project" value="UniProtKB-KW"/>
</dbReference>
<dbReference type="GO" id="GO:0046656">
    <property type="term" value="P:folic acid biosynthetic process"/>
    <property type="evidence" value="ECO:0007669"/>
    <property type="project" value="UniProtKB-KW"/>
</dbReference>
<dbReference type="GO" id="GO:0046654">
    <property type="term" value="P:tetrahydrofolate biosynthetic process"/>
    <property type="evidence" value="ECO:0007669"/>
    <property type="project" value="UniProtKB-UniPathway"/>
</dbReference>
<dbReference type="CDD" id="cd00739">
    <property type="entry name" value="DHPS"/>
    <property type="match status" value="1"/>
</dbReference>
<dbReference type="FunFam" id="3.20.20.20:FF:000006">
    <property type="entry name" value="Dihydropteroate synthase"/>
    <property type="match status" value="1"/>
</dbReference>
<dbReference type="Gene3D" id="3.20.20.20">
    <property type="entry name" value="Dihydropteroate synthase-like"/>
    <property type="match status" value="1"/>
</dbReference>
<dbReference type="InterPro" id="IPR045031">
    <property type="entry name" value="DHP_synth-like"/>
</dbReference>
<dbReference type="InterPro" id="IPR006390">
    <property type="entry name" value="DHP_synth_dom"/>
</dbReference>
<dbReference type="InterPro" id="IPR011005">
    <property type="entry name" value="Dihydropteroate_synth-like_sf"/>
</dbReference>
<dbReference type="InterPro" id="IPR000489">
    <property type="entry name" value="Pterin-binding_dom"/>
</dbReference>
<dbReference type="NCBIfam" id="TIGR01496">
    <property type="entry name" value="DHPS"/>
    <property type="match status" value="1"/>
</dbReference>
<dbReference type="PANTHER" id="PTHR20941">
    <property type="entry name" value="FOLATE SYNTHESIS PROTEINS"/>
    <property type="match status" value="1"/>
</dbReference>
<dbReference type="PANTHER" id="PTHR20941:SF1">
    <property type="entry name" value="FOLIC ACID SYNTHESIS PROTEIN FOL1"/>
    <property type="match status" value="1"/>
</dbReference>
<dbReference type="Pfam" id="PF00809">
    <property type="entry name" value="Pterin_bind"/>
    <property type="match status" value="1"/>
</dbReference>
<dbReference type="SUPFAM" id="SSF51717">
    <property type="entry name" value="Dihydropteroate synthetase-like"/>
    <property type="match status" value="1"/>
</dbReference>
<dbReference type="PROSITE" id="PS00792">
    <property type="entry name" value="DHPS_1"/>
    <property type="match status" value="1"/>
</dbReference>
<dbReference type="PROSITE" id="PS00793">
    <property type="entry name" value="DHPS_2"/>
    <property type="match status" value="1"/>
</dbReference>
<dbReference type="PROSITE" id="PS50972">
    <property type="entry name" value="PTERIN_BINDING"/>
    <property type="match status" value="1"/>
</dbReference>
<comment type="function">
    <text evidence="2">Catalyzes the condensation of para-aminobenzoate (pABA) with 6-hydroxymethyl-7,8-dihydropterin diphosphate (DHPt-PP) to form 7,8-dihydropteroate (H2Pte), the immediate precursor of folate derivatives.</text>
</comment>
<comment type="catalytic activity">
    <reaction evidence="2">
        <text>(7,8-dihydropterin-6-yl)methyl diphosphate + 4-aminobenzoate = 7,8-dihydropteroate + diphosphate</text>
        <dbReference type="Rhea" id="RHEA:19949"/>
        <dbReference type="ChEBI" id="CHEBI:17836"/>
        <dbReference type="ChEBI" id="CHEBI:17839"/>
        <dbReference type="ChEBI" id="CHEBI:33019"/>
        <dbReference type="ChEBI" id="CHEBI:72950"/>
        <dbReference type="EC" id="2.5.1.15"/>
    </reaction>
</comment>
<comment type="cofactor">
    <cofactor evidence="2">
        <name>Mg(2+)</name>
        <dbReference type="ChEBI" id="CHEBI:18420"/>
    </cofactor>
</comment>
<comment type="pathway">
    <text>Cofactor biosynthesis; tetrahydrofolate biosynthesis; 7,8-dihydrofolate from 2-amino-4-hydroxy-6-hydroxymethyl-7,8-dihydropteridine diphosphate and 4-aminobenzoate: step 1/2.</text>
</comment>
<comment type="subunit">
    <text evidence="1">Homodimer or homotrimer.</text>
</comment>
<comment type="similarity">
    <text evidence="5">Belongs to the DHPS family.</text>
</comment>
<name>DHPS_STRP8</name>
<sequence>MKIGRFVIEGNAAIMGILNVTPDSFSDGGSYTTVQKALDHVEQMIADGAKIIDVGGESTRPGCQFVSATDEIDRVVPVIKAIKENYDILISIDTYKTETARAALEAGADILNDVWAGLYDGQMFALAAEYDAPIILMHNQDEEVYQEVTQDVCDFLGNRAQAALDAGVPKNNIWIDPGFGFAKSVQQNTELLKGLDRVCQLGYPVLFGISRKRVVDALLGGNTKAKERDGATAALSAYALGKGCQIVRVHDVKANQDIVAVLSQLM</sequence>
<accession>Q8P152</accession>
<gene>
    <name type="primary">folP</name>
    <name type="ordered locus">spyM18_1060</name>
</gene>
<feature type="chain" id="PRO_0000168236" description="Dihydropteroate synthase">
    <location>
        <begin position="1"/>
        <end position="266"/>
    </location>
</feature>
<feature type="domain" description="Pterin-binding" evidence="4">
    <location>
        <begin position="12"/>
        <end position="260"/>
    </location>
</feature>
<feature type="binding site" evidence="3">
    <location>
        <position position="19"/>
    </location>
    <ligand>
        <name>Mg(2+)</name>
        <dbReference type="ChEBI" id="CHEBI:18420"/>
    </ligand>
</feature>
<feature type="binding site" evidence="2">
    <location>
        <position position="59"/>
    </location>
    <ligand>
        <name>(7,8-dihydropterin-6-yl)methyl diphosphate</name>
        <dbReference type="ChEBI" id="CHEBI:72950"/>
    </ligand>
</feature>
<feature type="binding site" evidence="2">
    <location>
        <position position="93"/>
    </location>
    <ligand>
        <name>(7,8-dihydropterin-6-yl)methyl diphosphate</name>
        <dbReference type="ChEBI" id="CHEBI:72950"/>
    </ligand>
</feature>
<feature type="binding site" evidence="2">
    <location>
        <position position="112"/>
    </location>
    <ligand>
        <name>(7,8-dihydropterin-6-yl)methyl diphosphate</name>
        <dbReference type="ChEBI" id="CHEBI:72950"/>
    </ligand>
</feature>
<feature type="binding site" evidence="2">
    <location>
        <position position="176"/>
    </location>
    <ligand>
        <name>(7,8-dihydropterin-6-yl)methyl diphosphate</name>
        <dbReference type="ChEBI" id="CHEBI:72950"/>
    </ligand>
</feature>
<feature type="binding site" evidence="2">
    <location>
        <position position="212"/>
    </location>
    <ligand>
        <name>(7,8-dihydropterin-6-yl)methyl diphosphate</name>
        <dbReference type="ChEBI" id="CHEBI:72950"/>
    </ligand>
</feature>
<feature type="binding site" evidence="2">
    <location>
        <begin position="248"/>
        <end position="250"/>
    </location>
    <ligand>
        <name>(7,8-dihydropterin-6-yl)methyl diphosphate</name>
        <dbReference type="ChEBI" id="CHEBI:72950"/>
    </ligand>
</feature>
<evidence type="ECO:0000250" key="1"/>
<evidence type="ECO:0000250" key="2">
    <source>
        <dbReference type="UniProtKB" id="P0AC13"/>
    </source>
</evidence>
<evidence type="ECO:0000250" key="3">
    <source>
        <dbReference type="UniProtKB" id="P9WND1"/>
    </source>
</evidence>
<evidence type="ECO:0000255" key="4">
    <source>
        <dbReference type="PROSITE-ProRule" id="PRU00334"/>
    </source>
</evidence>
<evidence type="ECO:0000305" key="5"/>
<keyword id="KW-0289">Folate biosynthesis</keyword>
<keyword id="KW-0460">Magnesium</keyword>
<keyword id="KW-0479">Metal-binding</keyword>
<keyword id="KW-0808">Transferase</keyword>
<organism>
    <name type="scientific">Streptococcus pyogenes serotype M18 (strain MGAS8232)</name>
    <dbReference type="NCBI Taxonomy" id="186103"/>
    <lineage>
        <taxon>Bacteria</taxon>
        <taxon>Bacillati</taxon>
        <taxon>Bacillota</taxon>
        <taxon>Bacilli</taxon>
        <taxon>Lactobacillales</taxon>
        <taxon>Streptococcaceae</taxon>
        <taxon>Streptococcus</taxon>
    </lineage>
</organism>